<dbReference type="EC" id="1.1.1.86" evidence="1"/>
<dbReference type="EMBL" id="Y18930">
    <property type="protein sequence ID" value="CAB57724.1"/>
    <property type="molecule type" value="Genomic_DNA"/>
</dbReference>
<dbReference type="EMBL" id="AE006641">
    <property type="protein sequence ID" value="AAK40890.1"/>
    <property type="molecule type" value="Genomic_DNA"/>
</dbReference>
<dbReference type="PIR" id="C90204">
    <property type="entry name" value="C90204"/>
</dbReference>
<dbReference type="RefSeq" id="WP_009991091.1">
    <property type="nucleotide sequence ID" value="NC_002754.1"/>
</dbReference>
<dbReference type="SMR" id="Q9UWX9"/>
<dbReference type="FunCoup" id="Q9UWX9">
    <property type="interactions" value="205"/>
</dbReference>
<dbReference type="STRING" id="273057.SSO0576"/>
<dbReference type="PaxDb" id="273057-SSO0576"/>
<dbReference type="EnsemblBacteria" id="AAK40890">
    <property type="protein sequence ID" value="AAK40890"/>
    <property type="gene ID" value="SSO0576"/>
</dbReference>
<dbReference type="GeneID" id="44129579"/>
<dbReference type="KEGG" id="sso:SSO0576"/>
<dbReference type="PATRIC" id="fig|273057.12.peg.584"/>
<dbReference type="eggNOG" id="arCOG04465">
    <property type="taxonomic scope" value="Archaea"/>
</dbReference>
<dbReference type="HOGENOM" id="CLU_033821_0_1_2"/>
<dbReference type="InParanoid" id="Q9UWX9"/>
<dbReference type="PhylomeDB" id="Q9UWX9"/>
<dbReference type="UniPathway" id="UPA00047">
    <property type="reaction ID" value="UER00056"/>
</dbReference>
<dbReference type="UniPathway" id="UPA00049">
    <property type="reaction ID" value="UER00060"/>
</dbReference>
<dbReference type="Proteomes" id="UP000001974">
    <property type="component" value="Chromosome"/>
</dbReference>
<dbReference type="GO" id="GO:0004455">
    <property type="term" value="F:ketol-acid reductoisomerase activity"/>
    <property type="evidence" value="ECO:0000318"/>
    <property type="project" value="GO_Central"/>
</dbReference>
<dbReference type="GO" id="GO:0000287">
    <property type="term" value="F:magnesium ion binding"/>
    <property type="evidence" value="ECO:0007669"/>
    <property type="project" value="UniProtKB-UniRule"/>
</dbReference>
<dbReference type="GO" id="GO:0050661">
    <property type="term" value="F:NADP binding"/>
    <property type="evidence" value="ECO:0007669"/>
    <property type="project" value="InterPro"/>
</dbReference>
<dbReference type="GO" id="GO:0009097">
    <property type="term" value="P:isoleucine biosynthetic process"/>
    <property type="evidence" value="ECO:0000318"/>
    <property type="project" value="GO_Central"/>
</dbReference>
<dbReference type="GO" id="GO:0009099">
    <property type="term" value="P:L-valine biosynthetic process"/>
    <property type="evidence" value="ECO:0000318"/>
    <property type="project" value="GO_Central"/>
</dbReference>
<dbReference type="FunFam" id="3.40.50.720:FF:000023">
    <property type="entry name" value="Ketol-acid reductoisomerase (NADP(+))"/>
    <property type="match status" value="1"/>
</dbReference>
<dbReference type="Gene3D" id="6.10.240.10">
    <property type="match status" value="1"/>
</dbReference>
<dbReference type="Gene3D" id="3.40.50.720">
    <property type="entry name" value="NAD(P)-binding Rossmann-like Domain"/>
    <property type="match status" value="1"/>
</dbReference>
<dbReference type="HAMAP" id="MF_00435">
    <property type="entry name" value="IlvC"/>
    <property type="match status" value="1"/>
</dbReference>
<dbReference type="InterPro" id="IPR008927">
    <property type="entry name" value="6-PGluconate_DH-like_C_sf"/>
</dbReference>
<dbReference type="InterPro" id="IPR013023">
    <property type="entry name" value="KARI"/>
</dbReference>
<dbReference type="InterPro" id="IPR000506">
    <property type="entry name" value="KARI_C"/>
</dbReference>
<dbReference type="InterPro" id="IPR013116">
    <property type="entry name" value="KARI_N"/>
</dbReference>
<dbReference type="InterPro" id="IPR014359">
    <property type="entry name" value="KARI_prok"/>
</dbReference>
<dbReference type="InterPro" id="IPR036291">
    <property type="entry name" value="NAD(P)-bd_dom_sf"/>
</dbReference>
<dbReference type="NCBIfam" id="TIGR00465">
    <property type="entry name" value="ilvC"/>
    <property type="match status" value="1"/>
</dbReference>
<dbReference type="NCBIfam" id="NF004017">
    <property type="entry name" value="PRK05479.1"/>
    <property type="match status" value="1"/>
</dbReference>
<dbReference type="PANTHER" id="PTHR21371">
    <property type="entry name" value="KETOL-ACID REDUCTOISOMERASE, MITOCHONDRIAL"/>
    <property type="match status" value="1"/>
</dbReference>
<dbReference type="PANTHER" id="PTHR21371:SF1">
    <property type="entry name" value="KETOL-ACID REDUCTOISOMERASE, MITOCHONDRIAL"/>
    <property type="match status" value="1"/>
</dbReference>
<dbReference type="Pfam" id="PF01450">
    <property type="entry name" value="KARI_C"/>
    <property type="match status" value="1"/>
</dbReference>
<dbReference type="Pfam" id="PF07991">
    <property type="entry name" value="KARI_N"/>
    <property type="match status" value="1"/>
</dbReference>
<dbReference type="PIRSF" id="PIRSF000116">
    <property type="entry name" value="IlvC_gammaproteo"/>
    <property type="match status" value="1"/>
</dbReference>
<dbReference type="SUPFAM" id="SSF48179">
    <property type="entry name" value="6-phosphogluconate dehydrogenase C-terminal domain-like"/>
    <property type="match status" value="1"/>
</dbReference>
<dbReference type="SUPFAM" id="SSF51735">
    <property type="entry name" value="NAD(P)-binding Rossmann-fold domains"/>
    <property type="match status" value="1"/>
</dbReference>
<dbReference type="PROSITE" id="PS51851">
    <property type="entry name" value="KARI_C"/>
    <property type="match status" value="1"/>
</dbReference>
<dbReference type="PROSITE" id="PS51850">
    <property type="entry name" value="KARI_N"/>
    <property type="match status" value="1"/>
</dbReference>
<accession>Q9UWX9</accession>
<feature type="chain" id="PRO_0000151400" description="Ketol-acid reductoisomerase (NADP(+))">
    <location>
        <begin position="1"/>
        <end position="335"/>
    </location>
</feature>
<feature type="domain" description="KARI N-terminal Rossmann" evidence="2">
    <location>
        <begin position="5"/>
        <end position="185"/>
    </location>
</feature>
<feature type="domain" description="KARI C-terminal knotted" evidence="3">
    <location>
        <begin position="186"/>
        <end position="331"/>
    </location>
</feature>
<feature type="active site" evidence="1">
    <location>
        <position position="111"/>
    </location>
</feature>
<feature type="binding site" evidence="1">
    <location>
        <begin position="28"/>
        <end position="31"/>
    </location>
    <ligand>
        <name>NADP(+)</name>
        <dbReference type="ChEBI" id="CHEBI:58349"/>
    </ligand>
</feature>
<feature type="binding site" evidence="1">
    <location>
        <position position="56"/>
    </location>
    <ligand>
        <name>NADP(+)</name>
        <dbReference type="ChEBI" id="CHEBI:58349"/>
    </ligand>
</feature>
<feature type="binding site" evidence="1">
    <location>
        <begin position="86"/>
        <end position="89"/>
    </location>
    <ligand>
        <name>NADP(+)</name>
        <dbReference type="ChEBI" id="CHEBI:58349"/>
    </ligand>
</feature>
<feature type="binding site" evidence="1">
    <location>
        <position position="137"/>
    </location>
    <ligand>
        <name>NADP(+)</name>
        <dbReference type="ChEBI" id="CHEBI:58349"/>
    </ligand>
</feature>
<feature type="binding site" evidence="1">
    <location>
        <position position="194"/>
    </location>
    <ligand>
        <name>Mg(2+)</name>
        <dbReference type="ChEBI" id="CHEBI:18420"/>
        <label>1</label>
    </ligand>
</feature>
<feature type="binding site" evidence="1">
    <location>
        <position position="194"/>
    </location>
    <ligand>
        <name>Mg(2+)</name>
        <dbReference type="ChEBI" id="CHEBI:18420"/>
        <label>2</label>
    </ligand>
</feature>
<feature type="binding site" evidence="1">
    <location>
        <position position="198"/>
    </location>
    <ligand>
        <name>Mg(2+)</name>
        <dbReference type="ChEBI" id="CHEBI:18420"/>
        <label>1</label>
    </ligand>
</feature>
<feature type="binding site" evidence="1">
    <location>
        <position position="230"/>
    </location>
    <ligand>
        <name>Mg(2+)</name>
        <dbReference type="ChEBI" id="CHEBI:18420"/>
        <label>2</label>
    </ligand>
</feature>
<feature type="binding site" evidence="1">
    <location>
        <position position="234"/>
    </location>
    <ligand>
        <name>Mg(2+)</name>
        <dbReference type="ChEBI" id="CHEBI:18420"/>
        <label>2</label>
    </ligand>
</feature>
<feature type="binding site" evidence="1">
    <location>
        <position position="255"/>
    </location>
    <ligand>
        <name>substrate</name>
    </ligand>
</feature>
<evidence type="ECO:0000255" key="1">
    <source>
        <dbReference type="HAMAP-Rule" id="MF_00435"/>
    </source>
</evidence>
<evidence type="ECO:0000255" key="2">
    <source>
        <dbReference type="PROSITE-ProRule" id="PRU01197"/>
    </source>
</evidence>
<evidence type="ECO:0000255" key="3">
    <source>
        <dbReference type="PROSITE-ProRule" id="PRU01198"/>
    </source>
</evidence>
<sequence length="335" mass="36811">MKCTSKIYTDNDANLDLIKGKRIAVLGYGSQGRAWAQNLRDSGLNVVVGLEREGKSWELAKSDGITPLHTKDAVKDADIIIFLVPDMVQRTLWLESVQPYMKKGADLVFAHGFNIHYKLIDPPKDSDVYMIAPKGPGPTVREYYKAGGGVPALVAVHQDVSGTALHKALAIAKGIGATRAGVIPTTFKEETETDLFGEQVILVGGIMELMRAAFETLVEEGYQPEVAYFETINELKMLVDLVYEKGISGMLKAVSDTAKYGGMTVGKFVIDESVRKRMKEALQRIKSGKFAEEWVEEYGRGMPTVVNGLSNVQNSLEEKIGNQLRDLVQKGKPKS</sequence>
<keyword id="KW-0028">Amino-acid biosynthesis</keyword>
<keyword id="KW-0100">Branched-chain amino acid biosynthesis</keyword>
<keyword id="KW-0460">Magnesium</keyword>
<keyword id="KW-0479">Metal-binding</keyword>
<keyword id="KW-0521">NADP</keyword>
<keyword id="KW-0560">Oxidoreductase</keyword>
<keyword id="KW-1185">Reference proteome</keyword>
<reference key="1">
    <citation type="journal article" date="2000" name="Genome">
        <title>Gene content and organization of a 281-kbp contig from the genome of the extremely thermophilic archaeon, Sulfolobus solfataricus P2.</title>
        <authorList>
            <person name="Charlebois R.L."/>
            <person name="Singh R.K."/>
            <person name="Chan-Weiher C.C.-Y."/>
            <person name="Allard G."/>
            <person name="Chow C."/>
            <person name="Confalonieri F."/>
            <person name="Curtis B."/>
            <person name="Duguet M."/>
            <person name="Erauso G."/>
            <person name="Faguy D."/>
            <person name="Gaasterland T."/>
            <person name="Garrett R.A."/>
            <person name="Gordon P."/>
            <person name="Jeffries A.C."/>
            <person name="Kozera C."/>
            <person name="Kushwaha N."/>
            <person name="Lafleur E."/>
            <person name="Medina N."/>
            <person name="Peng X."/>
            <person name="Penny S.L."/>
            <person name="She Q."/>
            <person name="St Jean A."/>
            <person name="van der Oost J."/>
            <person name="Young F."/>
            <person name="Zivanovic Y."/>
            <person name="Doolittle W.F."/>
            <person name="Ragan M.A."/>
            <person name="Sensen C.W."/>
        </authorList>
    </citation>
    <scope>NUCLEOTIDE SEQUENCE [LARGE SCALE GENOMIC DNA]</scope>
    <source>
        <strain>ATCC 35092 / DSM 1617 / JCM 11322 / P2</strain>
    </source>
</reference>
<reference key="2">
    <citation type="journal article" date="2001" name="Proc. Natl. Acad. Sci. U.S.A.">
        <title>The complete genome of the crenarchaeon Sulfolobus solfataricus P2.</title>
        <authorList>
            <person name="She Q."/>
            <person name="Singh R.K."/>
            <person name="Confalonieri F."/>
            <person name="Zivanovic Y."/>
            <person name="Allard G."/>
            <person name="Awayez M.J."/>
            <person name="Chan-Weiher C.C.-Y."/>
            <person name="Clausen I.G."/>
            <person name="Curtis B.A."/>
            <person name="De Moors A."/>
            <person name="Erauso G."/>
            <person name="Fletcher C."/>
            <person name="Gordon P.M.K."/>
            <person name="Heikamp-de Jong I."/>
            <person name="Jeffries A.C."/>
            <person name="Kozera C.J."/>
            <person name="Medina N."/>
            <person name="Peng X."/>
            <person name="Thi-Ngoc H.P."/>
            <person name="Redder P."/>
            <person name="Schenk M.E."/>
            <person name="Theriault C."/>
            <person name="Tolstrup N."/>
            <person name="Charlebois R.L."/>
            <person name="Doolittle W.F."/>
            <person name="Duguet M."/>
            <person name="Gaasterland T."/>
            <person name="Garrett R.A."/>
            <person name="Ragan M.A."/>
            <person name="Sensen C.W."/>
            <person name="Van der Oost J."/>
        </authorList>
    </citation>
    <scope>NUCLEOTIDE SEQUENCE [LARGE SCALE GENOMIC DNA]</scope>
    <source>
        <strain>ATCC 35092 / DSM 1617 / JCM 11322 / P2</strain>
    </source>
</reference>
<proteinExistence type="inferred from homology"/>
<name>ILVC_SACS2</name>
<protein>
    <recommendedName>
        <fullName evidence="1">Ketol-acid reductoisomerase (NADP(+))</fullName>
        <shortName evidence="1">KARI</shortName>
        <ecNumber evidence="1">1.1.1.86</ecNumber>
    </recommendedName>
    <alternativeName>
        <fullName evidence="1">Acetohydroxy-acid isomeroreductase</fullName>
        <shortName evidence="1">AHIR</shortName>
    </alternativeName>
    <alternativeName>
        <fullName evidence="1">Alpha-keto-beta-hydroxylacyl reductoisomerase</fullName>
    </alternativeName>
    <alternativeName>
        <fullName evidence="1">Ketol-acid reductoisomerase type 1</fullName>
    </alternativeName>
    <alternativeName>
        <fullName evidence="1">Ketol-acid reductoisomerase type I</fullName>
    </alternativeName>
</protein>
<organism>
    <name type="scientific">Saccharolobus solfataricus (strain ATCC 35092 / DSM 1617 / JCM 11322 / P2)</name>
    <name type="common">Sulfolobus solfataricus</name>
    <dbReference type="NCBI Taxonomy" id="273057"/>
    <lineage>
        <taxon>Archaea</taxon>
        <taxon>Thermoproteota</taxon>
        <taxon>Thermoprotei</taxon>
        <taxon>Sulfolobales</taxon>
        <taxon>Sulfolobaceae</taxon>
        <taxon>Saccharolobus</taxon>
    </lineage>
</organism>
<gene>
    <name evidence="1" type="primary">ilvC</name>
    <name type="synonym">ilvC-1</name>
    <name type="synonym">ilvC1</name>
    <name type="ordered locus">SSO0576</name>
</gene>
<comment type="function">
    <text evidence="1">Involved in the biosynthesis of branched-chain amino acids (BCAA). Catalyzes an alkyl-migration followed by a ketol-acid reduction of (S)-2-acetolactate (S2AL) to yield (R)-2,3-dihydroxy-isovalerate. In the isomerase reaction, S2AL is rearranged via a Mg-dependent methyl migration to produce 3-hydroxy-3-methyl-2-ketobutyrate (HMKB). In the reductase reaction, this 2-ketoacid undergoes a metal-dependent reduction by NADPH to yield (R)-2,3-dihydroxy-isovalerate.</text>
</comment>
<comment type="catalytic activity">
    <reaction evidence="1">
        <text>(2R)-2,3-dihydroxy-3-methylbutanoate + NADP(+) = (2S)-2-acetolactate + NADPH + H(+)</text>
        <dbReference type="Rhea" id="RHEA:22068"/>
        <dbReference type="ChEBI" id="CHEBI:15378"/>
        <dbReference type="ChEBI" id="CHEBI:49072"/>
        <dbReference type="ChEBI" id="CHEBI:57783"/>
        <dbReference type="ChEBI" id="CHEBI:58349"/>
        <dbReference type="ChEBI" id="CHEBI:58476"/>
        <dbReference type="EC" id="1.1.1.86"/>
    </reaction>
</comment>
<comment type="catalytic activity">
    <reaction evidence="1">
        <text>(2R,3R)-2,3-dihydroxy-3-methylpentanoate + NADP(+) = (S)-2-ethyl-2-hydroxy-3-oxobutanoate + NADPH + H(+)</text>
        <dbReference type="Rhea" id="RHEA:13493"/>
        <dbReference type="ChEBI" id="CHEBI:15378"/>
        <dbReference type="ChEBI" id="CHEBI:49256"/>
        <dbReference type="ChEBI" id="CHEBI:49258"/>
        <dbReference type="ChEBI" id="CHEBI:57783"/>
        <dbReference type="ChEBI" id="CHEBI:58349"/>
        <dbReference type="EC" id="1.1.1.86"/>
    </reaction>
</comment>
<comment type="cofactor">
    <cofactor evidence="1">
        <name>Mg(2+)</name>
        <dbReference type="ChEBI" id="CHEBI:18420"/>
    </cofactor>
    <text evidence="1">Binds 2 magnesium ions per subunit.</text>
</comment>
<comment type="pathway">
    <text evidence="1">Amino-acid biosynthesis; L-isoleucine biosynthesis; L-isoleucine from 2-oxobutanoate: step 2/4.</text>
</comment>
<comment type="pathway">
    <text evidence="1">Amino-acid biosynthesis; L-valine biosynthesis; L-valine from pyruvate: step 2/4.</text>
</comment>
<comment type="similarity">
    <text evidence="1">Belongs to the ketol-acid reductoisomerase family.</text>
</comment>